<accession>P52287</accession>
<evidence type="ECO:0000250" key="1"/>
<evidence type="ECO:0000305" key="2"/>
<gene>
    <name type="primary">Gnb3</name>
</gene>
<protein>
    <recommendedName>
        <fullName>Guanine nucleotide-binding protein G(I)/G(S)/G(T) subunit beta-3</fullName>
    </recommendedName>
    <alternativeName>
        <fullName>Transducin beta chain 3</fullName>
    </alternativeName>
</protein>
<dbReference type="EMBL" id="L29090">
    <property type="protein sequence ID" value="AAA62620.1"/>
    <property type="molecule type" value="Genomic_DNA"/>
</dbReference>
<dbReference type="EMBL" id="BC086422">
    <property type="protein sequence ID" value="AAH86422.1"/>
    <property type="molecule type" value="mRNA"/>
</dbReference>
<dbReference type="PIR" id="I53871">
    <property type="entry name" value="I53871"/>
</dbReference>
<dbReference type="RefSeq" id="NP_068630.1">
    <property type="nucleotide sequence ID" value="NM_021858.3"/>
</dbReference>
<dbReference type="SMR" id="P52287"/>
<dbReference type="BioGRID" id="248842">
    <property type="interactions" value="2"/>
</dbReference>
<dbReference type="FunCoup" id="P52287">
    <property type="interactions" value="365"/>
</dbReference>
<dbReference type="IntAct" id="P52287">
    <property type="interactions" value="1"/>
</dbReference>
<dbReference type="MINT" id="P52287"/>
<dbReference type="STRING" id="10116.ENSRNOP00000069551"/>
<dbReference type="PhosphoSitePlus" id="P52287"/>
<dbReference type="PaxDb" id="10116-ENSRNOP00000021480"/>
<dbReference type="Ensembl" id="ENSRNOT00000021481.5">
    <property type="protein sequence ID" value="ENSRNOP00000021480.3"/>
    <property type="gene ID" value="ENSRNOG00000015541.6"/>
</dbReference>
<dbReference type="GeneID" id="60449"/>
<dbReference type="KEGG" id="rno:60449"/>
<dbReference type="UCSC" id="RGD:708344">
    <property type="organism name" value="rat"/>
</dbReference>
<dbReference type="AGR" id="RGD:708344"/>
<dbReference type="CTD" id="2784"/>
<dbReference type="RGD" id="708344">
    <property type="gene designation" value="Gnb3"/>
</dbReference>
<dbReference type="eggNOG" id="KOG0286">
    <property type="taxonomic scope" value="Eukaryota"/>
</dbReference>
<dbReference type="GeneTree" id="ENSGT01000000214413"/>
<dbReference type="InParanoid" id="P52287"/>
<dbReference type="OMA" id="VYSHETI"/>
<dbReference type="OrthoDB" id="10255630at2759"/>
<dbReference type="PhylomeDB" id="P52287"/>
<dbReference type="TreeFam" id="TF106149"/>
<dbReference type="Reactome" id="R-RNO-1296041">
    <property type="pathway name" value="Activation of G protein gated Potassium channels"/>
</dbReference>
<dbReference type="Reactome" id="R-RNO-202040">
    <property type="pathway name" value="G-protein activation"/>
</dbReference>
<dbReference type="Reactome" id="R-RNO-381676">
    <property type="pathway name" value="Glucagon-like Peptide-1 (GLP1) regulates insulin secretion"/>
</dbReference>
<dbReference type="Reactome" id="R-RNO-392170">
    <property type="pathway name" value="ADP signalling through P2Y purinoceptor 12"/>
</dbReference>
<dbReference type="Reactome" id="R-RNO-392451">
    <property type="pathway name" value="G beta:gamma signalling through PI3Kgamma"/>
</dbReference>
<dbReference type="Reactome" id="R-RNO-400042">
    <property type="pathway name" value="Adrenaline,noradrenaline inhibits insulin secretion"/>
</dbReference>
<dbReference type="Reactome" id="R-RNO-4086398">
    <property type="pathway name" value="Ca2+ pathway"/>
</dbReference>
<dbReference type="Reactome" id="R-RNO-416476">
    <property type="pathway name" value="G alpha (q) signalling events"/>
</dbReference>
<dbReference type="Reactome" id="R-RNO-418594">
    <property type="pathway name" value="G alpha (i) signalling events"/>
</dbReference>
<dbReference type="Reactome" id="R-RNO-418597">
    <property type="pathway name" value="G alpha (z) signalling events"/>
</dbReference>
<dbReference type="Reactome" id="R-RNO-420092">
    <property type="pathway name" value="Glucagon-type ligand receptors"/>
</dbReference>
<dbReference type="Reactome" id="R-RNO-428930">
    <property type="pathway name" value="Thromboxane signalling through TP receptor"/>
</dbReference>
<dbReference type="Reactome" id="R-RNO-432040">
    <property type="pathway name" value="Vasopressin regulates renal water homeostasis via Aquaporins"/>
</dbReference>
<dbReference type="Reactome" id="R-RNO-456926">
    <property type="pathway name" value="Thrombin signalling through proteinase activated receptors (PARs)"/>
</dbReference>
<dbReference type="Reactome" id="R-RNO-6814122">
    <property type="pathway name" value="Cooperation of PDCL (PhLP1) and TRiC/CCT in G-protein beta folding"/>
</dbReference>
<dbReference type="Reactome" id="R-RNO-8964616">
    <property type="pathway name" value="G beta:gamma signalling through CDC42"/>
</dbReference>
<dbReference type="Reactome" id="R-RNO-9717207">
    <property type="pathway name" value="Sensory perception of sweet, bitter, and umami (glutamate) taste"/>
</dbReference>
<dbReference type="Reactome" id="R-RNO-9856530">
    <property type="pathway name" value="High laminar flow shear stress activates signaling by PIEZO1 and PECAM1:CDH5:KDR in endothelial cells"/>
</dbReference>
<dbReference type="Reactome" id="R-RNO-997272">
    <property type="pathway name" value="Inhibition of voltage gated Ca2+ channels via Gbeta/gamma subunits"/>
</dbReference>
<dbReference type="PRO" id="PR:P52287"/>
<dbReference type="Proteomes" id="UP000002494">
    <property type="component" value="Chromosome 4"/>
</dbReference>
<dbReference type="Bgee" id="ENSRNOG00000015541">
    <property type="expression patterns" value="Expressed in heart and 16 other cell types or tissues"/>
</dbReference>
<dbReference type="GO" id="GO:0044297">
    <property type="term" value="C:cell body"/>
    <property type="evidence" value="ECO:0000314"/>
    <property type="project" value="RGD"/>
</dbReference>
<dbReference type="GO" id="GO:0005737">
    <property type="term" value="C:cytoplasm"/>
    <property type="evidence" value="ECO:0000318"/>
    <property type="project" value="GO_Central"/>
</dbReference>
<dbReference type="GO" id="GO:0030425">
    <property type="term" value="C:dendrite"/>
    <property type="evidence" value="ECO:0000266"/>
    <property type="project" value="RGD"/>
</dbReference>
<dbReference type="GO" id="GO:0005834">
    <property type="term" value="C:heterotrimeric G-protein complex"/>
    <property type="evidence" value="ECO:0000266"/>
    <property type="project" value="RGD"/>
</dbReference>
<dbReference type="GO" id="GO:0051020">
    <property type="term" value="F:GTPase binding"/>
    <property type="evidence" value="ECO:0000266"/>
    <property type="project" value="RGD"/>
</dbReference>
<dbReference type="GO" id="GO:0030159">
    <property type="term" value="F:signaling receptor complex adaptor activity"/>
    <property type="evidence" value="ECO:0000318"/>
    <property type="project" value="GO_Central"/>
</dbReference>
<dbReference type="GO" id="GO:0030507">
    <property type="term" value="F:spectrin binding"/>
    <property type="evidence" value="ECO:0000314"/>
    <property type="project" value="MGI"/>
</dbReference>
<dbReference type="GO" id="GO:0006884">
    <property type="term" value="P:cell volume homeostasis"/>
    <property type="evidence" value="ECO:0000266"/>
    <property type="project" value="RGD"/>
</dbReference>
<dbReference type="GO" id="GO:0007186">
    <property type="term" value="P:G protein-coupled receptor signaling pathway"/>
    <property type="evidence" value="ECO:0000318"/>
    <property type="project" value="GO_Central"/>
</dbReference>
<dbReference type="GO" id="GO:0090181">
    <property type="term" value="P:regulation of cholesterol metabolic process"/>
    <property type="evidence" value="ECO:0000266"/>
    <property type="project" value="RGD"/>
</dbReference>
<dbReference type="GO" id="GO:0045598">
    <property type="term" value="P:regulation of fat cell differentiation"/>
    <property type="evidence" value="ECO:0000266"/>
    <property type="project" value="RGD"/>
</dbReference>
<dbReference type="GO" id="GO:0010468">
    <property type="term" value="P:regulation of gene expression"/>
    <property type="evidence" value="ECO:0000266"/>
    <property type="project" value="RGD"/>
</dbReference>
<dbReference type="GO" id="GO:0010906">
    <property type="term" value="P:regulation of glucose metabolic process"/>
    <property type="evidence" value="ECO:0000266"/>
    <property type="project" value="RGD"/>
</dbReference>
<dbReference type="GO" id="GO:0032350">
    <property type="term" value="P:regulation of hormone metabolic process"/>
    <property type="evidence" value="ECO:0000266"/>
    <property type="project" value="RGD"/>
</dbReference>
<dbReference type="GO" id="GO:1903725">
    <property type="term" value="P:regulation of phospholipid metabolic process"/>
    <property type="evidence" value="ECO:0000266"/>
    <property type="project" value="RGD"/>
</dbReference>
<dbReference type="GO" id="GO:0090207">
    <property type="term" value="P:regulation of triglyceride metabolic process"/>
    <property type="evidence" value="ECO:0000266"/>
    <property type="project" value="RGD"/>
</dbReference>
<dbReference type="CDD" id="cd00200">
    <property type="entry name" value="WD40"/>
    <property type="match status" value="1"/>
</dbReference>
<dbReference type="FunFam" id="2.130.10.10:FF:000007">
    <property type="entry name" value="Guanine nucleotide-binding protein G(I)/G(S)/G(T) subunit beta-1"/>
    <property type="match status" value="1"/>
</dbReference>
<dbReference type="Gene3D" id="2.130.10.10">
    <property type="entry name" value="YVTN repeat-like/Quinoprotein amine dehydrogenase"/>
    <property type="match status" value="1"/>
</dbReference>
<dbReference type="InterPro" id="IPR020472">
    <property type="entry name" value="G-protein_beta_WD-40_rep"/>
</dbReference>
<dbReference type="InterPro" id="IPR001632">
    <property type="entry name" value="Gprotein_B"/>
</dbReference>
<dbReference type="InterPro" id="IPR016346">
    <property type="entry name" value="Guanine_nucleotide-bd_bsu"/>
</dbReference>
<dbReference type="InterPro" id="IPR015943">
    <property type="entry name" value="WD40/YVTN_repeat-like_dom_sf"/>
</dbReference>
<dbReference type="InterPro" id="IPR019775">
    <property type="entry name" value="WD40_repeat_CS"/>
</dbReference>
<dbReference type="InterPro" id="IPR036322">
    <property type="entry name" value="WD40_repeat_dom_sf"/>
</dbReference>
<dbReference type="InterPro" id="IPR001680">
    <property type="entry name" value="WD40_rpt"/>
</dbReference>
<dbReference type="PANTHER" id="PTHR19850">
    <property type="entry name" value="GUANINE NUCLEOTIDE-BINDING PROTEIN BETA G PROTEIN BETA"/>
    <property type="match status" value="1"/>
</dbReference>
<dbReference type="Pfam" id="PF25391">
    <property type="entry name" value="WD40_Gbeta"/>
    <property type="match status" value="1"/>
</dbReference>
<dbReference type="PIRSF" id="PIRSF002394">
    <property type="entry name" value="GN-bd_beta"/>
    <property type="match status" value="1"/>
</dbReference>
<dbReference type="PRINTS" id="PR00319">
    <property type="entry name" value="GPROTEINB"/>
</dbReference>
<dbReference type="PRINTS" id="PR00320">
    <property type="entry name" value="GPROTEINBRPT"/>
</dbReference>
<dbReference type="SMART" id="SM00320">
    <property type="entry name" value="WD40"/>
    <property type="match status" value="7"/>
</dbReference>
<dbReference type="SUPFAM" id="SSF50978">
    <property type="entry name" value="WD40 repeat-like"/>
    <property type="match status" value="1"/>
</dbReference>
<dbReference type="PROSITE" id="PS00678">
    <property type="entry name" value="WD_REPEATS_1"/>
    <property type="match status" value="3"/>
</dbReference>
<dbReference type="PROSITE" id="PS50082">
    <property type="entry name" value="WD_REPEATS_2"/>
    <property type="match status" value="5"/>
</dbReference>
<dbReference type="PROSITE" id="PS50294">
    <property type="entry name" value="WD_REPEATS_REGION"/>
    <property type="match status" value="1"/>
</dbReference>
<comment type="function">
    <text>Guanine nucleotide-binding proteins (G proteins) are involved as a modulator or transducer in various transmembrane signaling systems. The beta and gamma chains are required for the GTPase activity, for replacement of GDP by GTP, and for G protein-effector interaction.</text>
</comment>
<comment type="subunit">
    <text evidence="1">G proteins are composed of 3 units, alpha, beta and gamma. Interacts with RASD2 (By similarity).</text>
</comment>
<comment type="tissue specificity">
    <text>Expressed at a high level in the heart and at a much lower level in the brain.</text>
</comment>
<comment type="similarity">
    <text evidence="2">Belongs to the WD repeat G protein beta family.</text>
</comment>
<proteinExistence type="evidence at protein level"/>
<sequence length="340" mass="37180">MGEMEQLKQEAEQLKKQIADARKACADITLAELVSGLEVVGRVQMRTRRTLRGHLAKIYAMHWATDSKLLVSASQDGKLIVWDTYTTNKVHAIPLRSSWVMTCAYAPSGNFVACGGLDNMCSIYSLKSREGNVKVSRELSAHTGYLSCCRFLDDNNIVTSSGDTTCALWDIETGQQKTVFVGHTGDCMSLAVSPDYKLFISGACDASAKLWDVREGTCRQTFTGHESDINAICFFPNGEAICTGSDDASCRLFDLRADQELTAYSHESIICGITSVAFSLSGRLLFAGYDDFNCNVWDSLKCERVGVLSGHDNRVSCLGVTADGMAVATGSWDSFLKIWN</sequence>
<feature type="chain" id="PRO_0000127701" description="Guanine nucleotide-binding protein G(I)/G(S)/G(T) subunit beta-3">
    <location>
        <begin position="1"/>
        <end position="340"/>
    </location>
</feature>
<feature type="repeat" description="WD 1">
    <location>
        <begin position="53"/>
        <end position="83"/>
    </location>
</feature>
<feature type="repeat" description="WD 2">
    <location>
        <begin position="95"/>
        <end position="125"/>
    </location>
</feature>
<feature type="repeat" description="WD 3">
    <location>
        <begin position="141"/>
        <end position="170"/>
    </location>
</feature>
<feature type="repeat" description="WD 4">
    <location>
        <begin position="182"/>
        <end position="212"/>
    </location>
</feature>
<feature type="repeat" description="WD 5">
    <location>
        <begin position="224"/>
        <end position="254"/>
    </location>
</feature>
<feature type="repeat" description="WD 6">
    <location>
        <begin position="268"/>
        <end position="298"/>
    </location>
</feature>
<feature type="repeat" description="WD 7">
    <location>
        <begin position="310"/>
        <end position="340"/>
    </location>
</feature>
<organism>
    <name type="scientific">Rattus norvegicus</name>
    <name type="common">Rat</name>
    <dbReference type="NCBI Taxonomy" id="10116"/>
    <lineage>
        <taxon>Eukaryota</taxon>
        <taxon>Metazoa</taxon>
        <taxon>Chordata</taxon>
        <taxon>Craniata</taxon>
        <taxon>Vertebrata</taxon>
        <taxon>Euteleostomi</taxon>
        <taxon>Mammalia</taxon>
        <taxon>Eutheria</taxon>
        <taxon>Euarchontoglires</taxon>
        <taxon>Glires</taxon>
        <taxon>Rodentia</taxon>
        <taxon>Myomorpha</taxon>
        <taxon>Muroidea</taxon>
        <taxon>Muridae</taxon>
        <taxon>Murinae</taxon>
        <taxon>Rattus</taxon>
    </lineage>
</organism>
<name>GBB3_RAT</name>
<keyword id="KW-0903">Direct protein sequencing</keyword>
<keyword id="KW-1185">Reference proteome</keyword>
<keyword id="KW-0677">Repeat</keyword>
<keyword id="KW-0807">Transducer</keyword>
<keyword id="KW-0853">WD repeat</keyword>
<reference key="1">
    <citation type="journal article" date="1994" name="Gene">
        <title>Cloning and sequencing of a rat heart cDNA encoding a G-protein beta subunit related to the human retinal beta 3 subunit.</title>
        <authorList>
            <person name="Ray K."/>
            <person name="Robishaw J.D."/>
        </authorList>
    </citation>
    <scope>NUCLEOTIDE SEQUENCE [MRNA]</scope>
    <source>
        <strain>Sprague-Dawley</strain>
        <tissue>Heart</tissue>
    </source>
</reference>
<reference key="2">
    <citation type="journal article" date="2004" name="Genome Res.">
        <title>The status, quality, and expansion of the NIH full-length cDNA project: the Mammalian Gene Collection (MGC).</title>
        <authorList>
            <consortium name="The MGC Project Team"/>
        </authorList>
    </citation>
    <scope>NUCLEOTIDE SEQUENCE [LARGE SCALE MRNA]</scope>
    <source>
        <tissue>Heart</tissue>
    </source>
</reference>
<reference key="3">
    <citation type="submission" date="2007-04" db="UniProtKB">
        <authorList>
            <person name="Lubec G."/>
            <person name="Chen W.-Q."/>
        </authorList>
    </citation>
    <scope>PROTEIN SEQUENCE OF 69-78</scope>
    <scope>IDENTIFICATION BY MASS SPECTROMETRY</scope>
    <source>
        <strain>Sprague-Dawley</strain>
        <tissue>Hippocampus</tissue>
    </source>
</reference>